<reference key="1">
    <citation type="journal article" date="2009" name="Proc. Natl. Acad. Sci. U.S.A.">
        <title>Biogeography of the Sulfolobus islandicus pan-genome.</title>
        <authorList>
            <person name="Reno M.L."/>
            <person name="Held N.L."/>
            <person name="Fields C.J."/>
            <person name="Burke P.V."/>
            <person name="Whitaker R.J."/>
        </authorList>
    </citation>
    <scope>NUCLEOTIDE SEQUENCE [LARGE SCALE GENOMIC DNA]</scope>
    <source>
        <strain>M.16.27</strain>
    </source>
</reference>
<organism>
    <name type="scientific">Saccharolobus islandicus (strain M.16.27)</name>
    <name type="common">Sulfolobus islandicus</name>
    <dbReference type="NCBI Taxonomy" id="427318"/>
    <lineage>
        <taxon>Archaea</taxon>
        <taxon>Thermoproteota</taxon>
        <taxon>Thermoprotei</taxon>
        <taxon>Sulfolobales</taxon>
        <taxon>Sulfolobaceae</taxon>
        <taxon>Saccharolobus</taxon>
    </lineage>
</organism>
<name>Y1243_SACI3</name>
<accession>C3N555</accession>
<evidence type="ECO:0000255" key="1">
    <source>
        <dbReference type="HAMAP-Rule" id="MF_01112"/>
    </source>
</evidence>
<protein>
    <recommendedName>
        <fullName evidence="1">UPF0201 protein M1627_1243</fullName>
    </recommendedName>
</protein>
<gene>
    <name type="ordered locus">M1627_1243</name>
</gene>
<proteinExistence type="inferred from homology"/>
<dbReference type="EMBL" id="CP001401">
    <property type="protein sequence ID" value="ACP55130.1"/>
    <property type="molecule type" value="Genomic_DNA"/>
</dbReference>
<dbReference type="RefSeq" id="WP_012711201.1">
    <property type="nucleotide sequence ID" value="NC_012632.1"/>
</dbReference>
<dbReference type="SMR" id="C3N555"/>
<dbReference type="KEGG" id="sim:M1627_1243"/>
<dbReference type="HOGENOM" id="CLU_134829_1_0_2"/>
<dbReference type="Proteomes" id="UP000002307">
    <property type="component" value="Chromosome"/>
</dbReference>
<dbReference type="Gene3D" id="3.30.1440.10">
    <property type="match status" value="1"/>
</dbReference>
<dbReference type="HAMAP" id="MF_01112">
    <property type="entry name" value="UPF0201"/>
    <property type="match status" value="1"/>
</dbReference>
<dbReference type="InterPro" id="IPR002739">
    <property type="entry name" value="PAB1135-like"/>
</dbReference>
<dbReference type="InterPro" id="IPR022803">
    <property type="entry name" value="Ribosomal_uL5_dom_sf"/>
</dbReference>
<dbReference type="NCBIfam" id="NF001687">
    <property type="entry name" value="PRK00447.1"/>
    <property type="match status" value="1"/>
</dbReference>
<dbReference type="PANTHER" id="PTHR39652">
    <property type="entry name" value="UPF0201 PROTEIN TK1335"/>
    <property type="match status" value="1"/>
</dbReference>
<dbReference type="PANTHER" id="PTHR39652:SF1">
    <property type="entry name" value="UPF0201 PROTEIN TK1335"/>
    <property type="match status" value="1"/>
</dbReference>
<dbReference type="Pfam" id="PF01877">
    <property type="entry name" value="RNA_binding"/>
    <property type="match status" value="1"/>
</dbReference>
<dbReference type="SUPFAM" id="SSF55282">
    <property type="entry name" value="RL5-like"/>
    <property type="match status" value="1"/>
</dbReference>
<sequence>MVKVMVVAEVRPSEDVNKVLSAISNFFDFEKTNTRKEGIIDILVLEARTLKSLLKFHRVLRNERILDSARKYLMKGIEGNTIAFMIHKQAAAVGVLSFVDNDKESPLGAIKFYIEYQNPKEVVDWLAPRTAHGVPLWDNPIPPDV</sequence>
<feature type="chain" id="PRO_1000213583" description="UPF0201 protein M1627_1243">
    <location>
        <begin position="1"/>
        <end position="145"/>
    </location>
</feature>
<comment type="similarity">
    <text evidence="1">Belongs to the UPF0201 family.</text>
</comment>